<keyword id="KW-0238">DNA-binding</keyword>
<keyword id="KW-1185">Reference proteome</keyword>
<keyword id="KW-0804">Transcription</keyword>
<keyword id="KW-0805">Transcription regulation</keyword>
<keyword id="KW-0843">Virulence</keyword>
<feature type="chain" id="PRO_0000438537" description="HTH-type transcriptional regulator Rv1931c">
    <location>
        <begin position="1"/>
        <end position="259"/>
    </location>
</feature>
<feature type="domain" description="HTH araC/xylS-type" evidence="1">
    <location>
        <begin position="174"/>
        <end position="257"/>
    </location>
</feature>
<feature type="DNA-binding region" description="H-T-H motif" evidence="1">
    <location>
        <begin position="176"/>
        <end position="197"/>
    </location>
</feature>
<feature type="DNA-binding region" description="H-T-H motif" evidence="1">
    <location>
        <begin position="224"/>
        <end position="247"/>
    </location>
</feature>
<feature type="region of interest" description="Disordered" evidence="2">
    <location>
        <begin position="104"/>
        <end position="170"/>
    </location>
</feature>
<feature type="compositionally biased region" description="Basic residues" evidence="2">
    <location>
        <begin position="104"/>
        <end position="121"/>
    </location>
</feature>
<protein>
    <recommendedName>
        <fullName evidence="5">HTH-type transcriptional regulator Rv1931c</fullName>
    </recommendedName>
</protein>
<gene>
    <name type="ordered locus">Rv1931c</name>
</gene>
<reference key="1">
    <citation type="journal article" date="1998" name="Nature">
        <title>Deciphering the biology of Mycobacterium tuberculosis from the complete genome sequence.</title>
        <authorList>
            <person name="Cole S.T."/>
            <person name="Brosch R."/>
            <person name="Parkhill J."/>
            <person name="Garnier T."/>
            <person name="Churcher C.M."/>
            <person name="Harris D.E."/>
            <person name="Gordon S.V."/>
            <person name="Eiglmeier K."/>
            <person name="Gas S."/>
            <person name="Barry C.E. III"/>
            <person name="Tekaia F."/>
            <person name="Badcock K."/>
            <person name="Basham D."/>
            <person name="Brown D."/>
            <person name="Chillingworth T."/>
            <person name="Connor R."/>
            <person name="Davies R.M."/>
            <person name="Devlin K."/>
            <person name="Feltwell T."/>
            <person name="Gentles S."/>
            <person name="Hamlin N."/>
            <person name="Holroyd S."/>
            <person name="Hornsby T."/>
            <person name="Jagels K."/>
            <person name="Krogh A."/>
            <person name="McLean J."/>
            <person name="Moule S."/>
            <person name="Murphy L.D."/>
            <person name="Oliver S."/>
            <person name="Osborne J."/>
            <person name="Quail M.A."/>
            <person name="Rajandream M.A."/>
            <person name="Rogers J."/>
            <person name="Rutter S."/>
            <person name="Seeger K."/>
            <person name="Skelton S."/>
            <person name="Squares S."/>
            <person name="Squares R."/>
            <person name="Sulston J.E."/>
            <person name="Taylor K."/>
            <person name="Whitehead S."/>
            <person name="Barrell B.G."/>
        </authorList>
    </citation>
    <scope>NUCLEOTIDE SEQUENCE [LARGE SCALE GENOMIC DNA]</scope>
    <source>
        <strain>ATCC 25618 / H37Rv</strain>
    </source>
</reference>
<reference key="2">
    <citation type="journal article" date="2004" name="Infect. Immun.">
        <title>The AraC family transcriptional regulator Rv1931c plays a role in the virulence of Mycobacterium tuberculosis.</title>
        <authorList>
            <person name="Frota C.C."/>
            <person name="Papavinasasundaram K.G."/>
            <person name="Davis E.O."/>
            <person name="Colston M.J."/>
        </authorList>
    </citation>
    <scope>FUNCTION</scope>
    <scope>DISRUPTION PHENOTYPE</scope>
</reference>
<reference key="3">
    <citation type="journal article" date="2009" name="Microbiology">
        <title>Mce3R, a TetR-type transcriptional repressor, controls the expression of a regulon involved in lipid metabolism in Mycobacterium tuberculosis.</title>
        <authorList>
            <person name="de la Paz Santangelo M."/>
            <person name="Klepp L."/>
            <person name="Nunez-Garcia J."/>
            <person name="Blanco F.C."/>
            <person name="Soria M."/>
            <person name="Garcia-Pelayo M.C."/>
            <person name="Bianco M.V."/>
            <person name="Cataldi A.A."/>
            <person name="Golby P."/>
            <person name="Jackson M."/>
            <person name="Gordon S.V."/>
            <person name="Bigi F."/>
        </authorList>
    </citation>
    <scope>INDUCTION</scope>
</reference>
<dbReference type="EMBL" id="AL123456">
    <property type="protein sequence ID" value="CCP44698.1"/>
    <property type="molecule type" value="Genomic_DNA"/>
</dbReference>
<dbReference type="RefSeq" id="NP_216447.1">
    <property type="nucleotide sequence ID" value="NC_000962.3"/>
</dbReference>
<dbReference type="RefSeq" id="WP_003899087.1">
    <property type="nucleotide sequence ID" value="NZ_NVQJ01000034.1"/>
</dbReference>
<dbReference type="SMR" id="P95283"/>
<dbReference type="STRING" id="83332.Rv1931c"/>
<dbReference type="PaxDb" id="83332-Rv1931c"/>
<dbReference type="DNASU" id="885437"/>
<dbReference type="GeneID" id="885437"/>
<dbReference type="KEGG" id="mtu:Rv1931c"/>
<dbReference type="KEGG" id="mtv:RVBD_1931c"/>
<dbReference type="PATRIC" id="fig|83332.111.peg.2148"/>
<dbReference type="TubercuList" id="Rv1931c"/>
<dbReference type="eggNOG" id="COG4977">
    <property type="taxonomic scope" value="Bacteria"/>
</dbReference>
<dbReference type="HOGENOM" id="CLU_000445_59_0_11"/>
<dbReference type="InParanoid" id="P95283"/>
<dbReference type="OrthoDB" id="3992151at2"/>
<dbReference type="PhylomeDB" id="P95283"/>
<dbReference type="Proteomes" id="UP000001584">
    <property type="component" value="Chromosome"/>
</dbReference>
<dbReference type="GO" id="GO:0005886">
    <property type="term" value="C:plasma membrane"/>
    <property type="evidence" value="ECO:0007005"/>
    <property type="project" value="MTBBASE"/>
</dbReference>
<dbReference type="GO" id="GO:0003700">
    <property type="term" value="F:DNA-binding transcription factor activity"/>
    <property type="evidence" value="ECO:0007669"/>
    <property type="project" value="InterPro"/>
</dbReference>
<dbReference type="GO" id="GO:0043565">
    <property type="term" value="F:sequence-specific DNA binding"/>
    <property type="evidence" value="ECO:0007669"/>
    <property type="project" value="InterPro"/>
</dbReference>
<dbReference type="GO" id="GO:0006355">
    <property type="term" value="P:regulation of DNA-templated transcription"/>
    <property type="evidence" value="ECO:0000318"/>
    <property type="project" value="GO_Central"/>
</dbReference>
<dbReference type="Gene3D" id="3.40.50.880">
    <property type="match status" value="1"/>
</dbReference>
<dbReference type="Gene3D" id="1.10.10.60">
    <property type="entry name" value="Homeodomain-like"/>
    <property type="match status" value="2"/>
</dbReference>
<dbReference type="InterPro" id="IPR050204">
    <property type="entry name" value="AraC_XylS_family_regulators"/>
</dbReference>
<dbReference type="InterPro" id="IPR029062">
    <property type="entry name" value="Class_I_gatase-like"/>
</dbReference>
<dbReference type="InterPro" id="IPR002818">
    <property type="entry name" value="DJ-1/PfpI"/>
</dbReference>
<dbReference type="InterPro" id="IPR009057">
    <property type="entry name" value="Homeodomain-like_sf"/>
</dbReference>
<dbReference type="InterPro" id="IPR018060">
    <property type="entry name" value="HTH_AraC"/>
</dbReference>
<dbReference type="PANTHER" id="PTHR46796:SF13">
    <property type="entry name" value="HTH-TYPE TRANSCRIPTIONAL ACTIVATOR RHAS"/>
    <property type="match status" value="1"/>
</dbReference>
<dbReference type="PANTHER" id="PTHR46796">
    <property type="entry name" value="HTH-TYPE TRANSCRIPTIONAL ACTIVATOR RHAS-RELATED"/>
    <property type="match status" value="1"/>
</dbReference>
<dbReference type="Pfam" id="PF01965">
    <property type="entry name" value="DJ-1_PfpI"/>
    <property type="match status" value="1"/>
</dbReference>
<dbReference type="Pfam" id="PF12833">
    <property type="entry name" value="HTH_18"/>
    <property type="match status" value="1"/>
</dbReference>
<dbReference type="SMART" id="SM00342">
    <property type="entry name" value="HTH_ARAC"/>
    <property type="match status" value="1"/>
</dbReference>
<dbReference type="SUPFAM" id="SSF52317">
    <property type="entry name" value="Class I glutamine amidotransferase-like"/>
    <property type="match status" value="1"/>
</dbReference>
<dbReference type="SUPFAM" id="SSF46689">
    <property type="entry name" value="Homeodomain-like"/>
    <property type="match status" value="2"/>
</dbReference>
<dbReference type="PROSITE" id="PS01124">
    <property type="entry name" value="HTH_ARAC_FAMILY_2"/>
    <property type="match status" value="1"/>
</dbReference>
<evidence type="ECO:0000255" key="1">
    <source>
        <dbReference type="PROSITE-ProRule" id="PRU00593"/>
    </source>
</evidence>
<evidence type="ECO:0000256" key="2">
    <source>
        <dbReference type="SAM" id="MobiDB-lite"/>
    </source>
</evidence>
<evidence type="ECO:0000269" key="3">
    <source>
    </source>
</evidence>
<evidence type="ECO:0000269" key="4">
    <source>
    </source>
</evidence>
<evidence type="ECO:0000303" key="5">
    <source>
    </source>
</evidence>
<proteinExistence type="evidence at transcript level"/>
<accession>P95283</accession>
<accession>I6XZB7</accession>
<accession>L0T8A6</accession>
<organism>
    <name type="scientific">Mycobacterium tuberculosis (strain ATCC 25618 / H37Rv)</name>
    <dbReference type="NCBI Taxonomy" id="83332"/>
    <lineage>
        <taxon>Bacteria</taxon>
        <taxon>Bacillati</taxon>
        <taxon>Actinomycetota</taxon>
        <taxon>Actinomycetes</taxon>
        <taxon>Mycobacteriales</taxon>
        <taxon>Mycobacteriaceae</taxon>
        <taxon>Mycobacterium</taxon>
        <taxon>Mycobacterium tuberculosis complex</taxon>
    </lineage>
</organism>
<comment type="function">
    <text evidence="3">Controls the expression of genes important for virulence.</text>
</comment>
<comment type="induction">
    <text evidence="4">Repressed by Mce3R.</text>
</comment>
<comment type="disruption phenotype">
    <text evidence="3">Cells lacking this gene exhibit reduced survival both in macrophages and in a mouse infection model.</text>
</comment>
<sequence>MVIVGFPGDPVDTVILPGGAGVDAARSEPALIDWVKAVSGTARRVVTVCTGAFLAAEAGLLGRTPSDDALGLCRTFRPRISGRSGRCRPDLHAQFAEGVDRGWSHRRHRPRAGTGRRRPRHRDCPDGCPLARPVSAPTRWADPVRGSGVDATRQTDLDPPGAGGHRGRAGGAHRIGELAQRAAMSPRHFTRVFSDEVGEAPGRYVERIRTEAARRQLEETHDTVVAIAARCGFGTAETMRRSFIRRVGISPDQYRKAFA</sequence>
<name>Y1931_MYCTU</name>